<organism>
    <name type="scientific">Mus musculus</name>
    <name type="common">Mouse</name>
    <dbReference type="NCBI Taxonomy" id="10090"/>
    <lineage>
        <taxon>Eukaryota</taxon>
        <taxon>Metazoa</taxon>
        <taxon>Chordata</taxon>
        <taxon>Craniata</taxon>
        <taxon>Vertebrata</taxon>
        <taxon>Euteleostomi</taxon>
        <taxon>Mammalia</taxon>
        <taxon>Eutheria</taxon>
        <taxon>Euarchontoglires</taxon>
        <taxon>Glires</taxon>
        <taxon>Rodentia</taxon>
        <taxon>Myomorpha</taxon>
        <taxon>Muroidea</taxon>
        <taxon>Muridae</taxon>
        <taxon>Murinae</taxon>
        <taxon>Mus</taxon>
        <taxon>Mus</taxon>
    </lineage>
</organism>
<feature type="signal peptide" evidence="2">
    <location>
        <begin position="1"/>
        <end position="18"/>
    </location>
</feature>
<feature type="propeptide" id="PRO_0000027993" description="Activation peptide">
    <location>
        <begin position="19"/>
        <end position="24"/>
    </location>
</feature>
<feature type="chain" id="PRO_0000027994" description="Kallikrein 1-related peptidase b26">
    <location>
        <begin position="25"/>
        <end position="261"/>
    </location>
</feature>
<feature type="domain" description="Peptidase S1" evidence="1">
    <location>
        <begin position="25"/>
        <end position="258"/>
    </location>
</feature>
<feature type="active site" description="Charge relay system">
    <location>
        <position position="65"/>
    </location>
</feature>
<feature type="active site" description="Charge relay system">
    <location>
        <position position="120"/>
    </location>
</feature>
<feature type="active site" description="Charge relay system">
    <location>
        <position position="213"/>
    </location>
</feature>
<feature type="glycosylation site" description="N-linked (GlcNAc...) asparagine" evidence="2">
    <location>
        <position position="102"/>
    </location>
</feature>
<feature type="disulfide bond" evidence="1">
    <location>
        <begin position="31"/>
        <end position="173"/>
    </location>
</feature>
<feature type="disulfide bond" evidence="1">
    <location>
        <begin position="50"/>
        <end position="66"/>
    </location>
</feature>
<feature type="disulfide bond" evidence="1">
    <location>
        <begin position="152"/>
        <end position="219"/>
    </location>
</feature>
<feature type="disulfide bond" evidence="1">
    <location>
        <begin position="184"/>
        <end position="198"/>
    </location>
</feature>
<feature type="disulfide bond" evidence="1">
    <location>
        <begin position="209"/>
        <end position="234"/>
    </location>
</feature>
<feature type="sequence conflict" description="In Ref. 4." evidence="2" ref="4">
    <original>GA</original>
    <variation>EY</variation>
    <location>
        <begin position="114"/>
        <end position="115"/>
    </location>
</feature>
<feature type="sequence conflict" description="In Ref. 4." evidence="2" ref="4">
    <original>F</original>
    <variation>Y</variation>
    <location>
        <position position="117"/>
    </location>
</feature>
<feature type="sequence conflict" description="In Ref. 4; CAA24211." evidence="2" ref="4">
    <original>K</original>
    <variation>E</variation>
    <location>
        <position position="144"/>
    </location>
</feature>
<feature type="sequence conflict" description="In Ref. 4; CAA24211." evidence="2" ref="4">
    <original>P</original>
    <variation>L</variation>
    <location>
        <position position="148"/>
    </location>
</feature>
<accession>P36369</accession>
<accession>B9EI06</accession>
<accession>P00753</accession>
<accession>P00754</accession>
<gene>
    <name type="primary">Klk1b26</name>
    <name type="synonym">Klk-26</name>
    <name type="synonym">Klk26</name>
</gene>
<evidence type="ECO:0000255" key="1">
    <source>
        <dbReference type="PROSITE-ProRule" id="PRU00274"/>
    </source>
</evidence>
<evidence type="ECO:0000305" key="2"/>
<comment type="function">
    <text>Glandular kallikreins cleave Met-Lys and Arg-Ser bonds in kininogen to release Lys-bradykinin.</text>
</comment>
<comment type="function">
    <text>Prorenin-converting enzyme cleaves mouse REN-2 prorenin at a dibasic site to yield mature renin.</text>
</comment>
<comment type="catalytic activity">
    <reaction>
        <text>Preferential cleavage of Arg-|-Xaa bonds in small molecule substrates. Highly selective action to release kallidin (lysyl-bradykinin) from kininogen involves hydrolysis of Met-|-Xaa or Leu-|-Xaa.</text>
        <dbReference type="EC" id="3.4.21.35"/>
    </reaction>
</comment>
<comment type="similarity">
    <text evidence="1">Belongs to the peptidase S1 family. Kallikrein subfamily.</text>
</comment>
<reference key="1">
    <citation type="journal article" date="1991" name="FEBS Lett.">
        <title>The presence of two types of prorenin converting enzymes in the mouse submandibular gland.</title>
        <authorList>
            <person name="Kim W.S."/>
            <person name="Nakayama K."/>
            <person name="Murakami K."/>
        </authorList>
    </citation>
    <scope>NUCLEOTIDE SEQUENCE [MRNA]</scope>
    <source>
        <strain>ICR</strain>
        <tissue>Submandibular gland</tissue>
    </source>
</reference>
<reference key="2">
    <citation type="journal article" date="1984" name="J. Biol. Chem.">
        <title>Sequence of an epidermal growth factor-binding protein.</title>
        <authorList>
            <person name="Lundgren S."/>
            <person name="Ronne H."/>
            <person name="Rask L."/>
            <person name="Peterson P.A."/>
        </authorList>
    </citation>
    <scope>NUCLEOTIDE SEQUENCE [MRNA]</scope>
    <source>
        <strain>NMRI</strain>
    </source>
</reference>
<reference key="3">
    <citation type="journal article" date="2004" name="Genome Res.">
        <title>The status, quality, and expansion of the NIH full-length cDNA project: the Mammalian Gene Collection (MGC).</title>
        <authorList>
            <consortium name="The MGC Project Team"/>
        </authorList>
    </citation>
    <scope>NUCLEOTIDE SEQUENCE [LARGE SCALE MRNA]</scope>
    <source>
        <strain>FVB/N</strain>
        <tissue>Brain</tissue>
        <tissue>Salivary gland</tissue>
    </source>
</reference>
<reference key="4">
    <citation type="journal article" date="1982" name="J. Biol. Chem.">
        <title>Mouse glandular kallikrein genes. Nucleotide sequence of cloned cDNA coding for a member of the kallikrein arginyl esteropeptidase group of serine proteases.</title>
        <authorList>
            <person name="Richards R.I."/>
            <person name="Catanzaro D.F."/>
            <person name="Mason A.J."/>
            <person name="Morris B.J."/>
            <person name="Baxter J.D."/>
            <person name="Shine J."/>
        </authorList>
    </citation>
    <scope>NUCLEOTIDE SEQUENCE [MRNA] OF 113-261</scope>
    <source>
        <strain>Quakenbush inbred</strain>
    </source>
</reference>
<name>K1B26_MOUSE</name>
<keyword id="KW-1015">Disulfide bond</keyword>
<keyword id="KW-0325">Glycoprotein</keyword>
<keyword id="KW-0378">Hydrolase</keyword>
<keyword id="KW-0645">Protease</keyword>
<keyword id="KW-1185">Reference proteome</keyword>
<keyword id="KW-0720">Serine protease</keyword>
<keyword id="KW-0732">Signal</keyword>
<keyword id="KW-0865">Zymogen</keyword>
<dbReference type="EC" id="3.4.21.35"/>
<dbReference type="EMBL" id="K01831">
    <property type="protein sequence ID" value="AAA37540.1"/>
    <property type="molecule type" value="mRNA"/>
</dbReference>
<dbReference type="EMBL" id="X63327">
    <property type="protein sequence ID" value="CAA44931.1"/>
    <property type="molecule type" value="mRNA"/>
</dbReference>
<dbReference type="EMBL" id="BC024688">
    <property type="protein sequence ID" value="AAH24688.1"/>
    <property type="molecule type" value="mRNA"/>
</dbReference>
<dbReference type="EMBL" id="BC138704">
    <property type="protein sequence ID" value="AAI38705.1"/>
    <property type="molecule type" value="mRNA"/>
</dbReference>
<dbReference type="EMBL" id="V00828">
    <property type="protein sequence ID" value="CAA24211.1"/>
    <property type="molecule type" value="mRNA"/>
</dbReference>
<dbReference type="CCDS" id="CCDS39938.1"/>
<dbReference type="PIR" id="A00940">
    <property type="entry name" value="EGMSB"/>
</dbReference>
<dbReference type="RefSeq" id="NP_034774.1">
    <property type="nucleotide sequence ID" value="NM_010644.3"/>
</dbReference>
<dbReference type="SMR" id="P36369"/>
<dbReference type="FunCoup" id="P36369">
    <property type="interactions" value="84"/>
</dbReference>
<dbReference type="STRING" id="10090.ENSMUSP00000047488"/>
<dbReference type="MEROPS" id="S01.070"/>
<dbReference type="MEROPS" id="S01.173"/>
<dbReference type="GlyCosmos" id="P36369">
    <property type="glycosylation" value="1 site, No reported glycans"/>
</dbReference>
<dbReference type="GlyGen" id="P36369">
    <property type="glycosylation" value="1 site"/>
</dbReference>
<dbReference type="PaxDb" id="10090-ENSMUSP00000047488"/>
<dbReference type="ProteomicsDB" id="268931"/>
<dbReference type="DNASU" id="16618"/>
<dbReference type="Ensembl" id="ENSMUST00000048945.6">
    <property type="protein sequence ID" value="ENSMUSP00000047488.5"/>
    <property type="gene ID" value="ENSMUSG00000053719.11"/>
</dbReference>
<dbReference type="GeneID" id="16618"/>
<dbReference type="KEGG" id="mmu:16618"/>
<dbReference type="UCSC" id="uc009gof.3">
    <property type="organism name" value="mouse"/>
</dbReference>
<dbReference type="AGR" id="MGI:891981"/>
<dbReference type="CTD" id="16618"/>
<dbReference type="MGI" id="MGI:891981">
    <property type="gene designation" value="Klk1b26"/>
</dbReference>
<dbReference type="VEuPathDB" id="HostDB:ENSMUSG00000053719"/>
<dbReference type="eggNOG" id="KOG3627">
    <property type="taxonomic scope" value="Eukaryota"/>
</dbReference>
<dbReference type="GeneTree" id="ENSGT01020000230389"/>
<dbReference type="HOGENOM" id="CLU_006842_1_1_1"/>
<dbReference type="InParanoid" id="P36369"/>
<dbReference type="OMA" id="NENCAKV"/>
<dbReference type="OrthoDB" id="10061449at2759"/>
<dbReference type="PhylomeDB" id="P36369"/>
<dbReference type="TreeFam" id="TF331065"/>
<dbReference type="Reactome" id="R-MMU-1592389">
    <property type="pathway name" value="Activation of Matrix Metalloproteinases"/>
</dbReference>
<dbReference type="BioGRID-ORCS" id="16618">
    <property type="hits" value="3 hits in 77 CRISPR screens"/>
</dbReference>
<dbReference type="PRO" id="PR:P36369"/>
<dbReference type="Proteomes" id="UP000000589">
    <property type="component" value="Chromosome 7"/>
</dbReference>
<dbReference type="RNAct" id="P36369">
    <property type="molecule type" value="protein"/>
</dbReference>
<dbReference type="Bgee" id="ENSMUSG00000053719">
    <property type="expression patterns" value="Expressed in submandibular gland and 39 other cell types or tissues"/>
</dbReference>
<dbReference type="ExpressionAtlas" id="P36369">
    <property type="expression patterns" value="baseline and differential"/>
</dbReference>
<dbReference type="GO" id="GO:0005615">
    <property type="term" value="C:extracellular space"/>
    <property type="evidence" value="ECO:0000314"/>
    <property type="project" value="MGI"/>
</dbReference>
<dbReference type="GO" id="GO:0008233">
    <property type="term" value="F:peptidase activity"/>
    <property type="evidence" value="ECO:0000314"/>
    <property type="project" value="MGI"/>
</dbReference>
<dbReference type="GO" id="GO:0004252">
    <property type="term" value="F:serine-type endopeptidase activity"/>
    <property type="evidence" value="ECO:0007669"/>
    <property type="project" value="UniProtKB-EC"/>
</dbReference>
<dbReference type="GO" id="GO:0002035">
    <property type="term" value="P:brain renin-angiotensin system"/>
    <property type="evidence" value="ECO:0000314"/>
    <property type="project" value="MGI"/>
</dbReference>
<dbReference type="GO" id="GO:0031638">
    <property type="term" value="P:zymogen activation"/>
    <property type="evidence" value="ECO:0000314"/>
    <property type="project" value="MGI"/>
</dbReference>
<dbReference type="CDD" id="cd00190">
    <property type="entry name" value="Tryp_SPc"/>
    <property type="match status" value="1"/>
</dbReference>
<dbReference type="FunFam" id="2.40.10.10:FF:000032">
    <property type="entry name" value="Kallikrein 1-related peptidase C9"/>
    <property type="match status" value="1"/>
</dbReference>
<dbReference type="FunFam" id="2.40.10.10:FF:000042">
    <property type="entry name" value="Kallikrein 1-related peptidase C9"/>
    <property type="match status" value="1"/>
</dbReference>
<dbReference type="Gene3D" id="2.40.10.10">
    <property type="entry name" value="Trypsin-like serine proteases"/>
    <property type="match status" value="2"/>
</dbReference>
<dbReference type="InterPro" id="IPR009003">
    <property type="entry name" value="Peptidase_S1_PA"/>
</dbReference>
<dbReference type="InterPro" id="IPR043504">
    <property type="entry name" value="Peptidase_S1_PA_chymotrypsin"/>
</dbReference>
<dbReference type="InterPro" id="IPR001314">
    <property type="entry name" value="Peptidase_S1A"/>
</dbReference>
<dbReference type="InterPro" id="IPR001254">
    <property type="entry name" value="Trypsin_dom"/>
</dbReference>
<dbReference type="InterPro" id="IPR018114">
    <property type="entry name" value="TRYPSIN_HIS"/>
</dbReference>
<dbReference type="InterPro" id="IPR033116">
    <property type="entry name" value="TRYPSIN_SER"/>
</dbReference>
<dbReference type="PANTHER" id="PTHR24271:SF47">
    <property type="entry name" value="KALLIKREIN-1"/>
    <property type="match status" value="1"/>
</dbReference>
<dbReference type="PANTHER" id="PTHR24271">
    <property type="entry name" value="KALLIKREIN-RELATED"/>
    <property type="match status" value="1"/>
</dbReference>
<dbReference type="Pfam" id="PF00089">
    <property type="entry name" value="Trypsin"/>
    <property type="match status" value="1"/>
</dbReference>
<dbReference type="PRINTS" id="PR00722">
    <property type="entry name" value="CHYMOTRYPSIN"/>
</dbReference>
<dbReference type="SMART" id="SM00020">
    <property type="entry name" value="Tryp_SPc"/>
    <property type="match status" value="1"/>
</dbReference>
<dbReference type="SUPFAM" id="SSF50494">
    <property type="entry name" value="Trypsin-like serine proteases"/>
    <property type="match status" value="1"/>
</dbReference>
<dbReference type="PROSITE" id="PS50240">
    <property type="entry name" value="TRYPSIN_DOM"/>
    <property type="match status" value="1"/>
</dbReference>
<dbReference type="PROSITE" id="PS00134">
    <property type="entry name" value="TRYPSIN_HIS"/>
    <property type="match status" value="1"/>
</dbReference>
<dbReference type="PROSITE" id="PS00135">
    <property type="entry name" value="TRYPSIN_SER"/>
    <property type="match status" value="1"/>
</dbReference>
<sequence length="261" mass="28463">MWFLILFPALSLGGIDAAPPLQSRVVGGFNCEKNSQPWQVAVYYQKEHICGGVLLDRNWVLTAAHCYVDQYEVWLGKNKLFQEEPSAQHRLVSKSFPHPGFNMSLLMLQTTPPGADFSNDLMLLRLSKPADITDVVKPIALPTKEPKPGSTCLASGWGSITPTRWQKSDDLQCVFITLLPNENCAKVYLQKVTDVMLCAGEMGGGKDTCAGDSGGPLICDGILQGTTSNGPEPCGKPGVPAIYTNLIKFNSWIKDTMMKNA</sequence>
<proteinExistence type="evidence at transcript level"/>
<protein>
    <recommendedName>
        <fullName>Kallikrein 1-related peptidase b26</fullName>
        <ecNumber>3.4.21.35</ecNumber>
    </recommendedName>
    <alternativeName>
        <fullName>Glandular kallikrein K26</fullName>
        <shortName>mGK-26</shortName>
    </alternativeName>
    <alternativeName>
        <fullName>Prorenin-converting enzyme 2</fullName>
        <shortName>PRECE-2</shortName>
    </alternativeName>
    <alternativeName>
        <fullName>Tissue kallikrein 26</fullName>
    </alternativeName>
</protein>